<comment type="function">
    <text evidence="1">One of the primary rRNA binding proteins, it binds directly to 16S rRNA central domain where it helps coordinate assembly of the platform of the 30S subunit.</text>
</comment>
<comment type="subunit">
    <text evidence="1">Part of the 30S ribosomal subunit. Contacts proteins S5 and S12.</text>
</comment>
<comment type="similarity">
    <text evidence="1">Belongs to the universal ribosomal protein uS8 family.</text>
</comment>
<proteinExistence type="inferred from homology"/>
<name>RS8_BORA1</name>
<dbReference type="EMBL" id="AM167904">
    <property type="protein sequence ID" value="CAJ47632.1"/>
    <property type="molecule type" value="Genomic_DNA"/>
</dbReference>
<dbReference type="RefSeq" id="WP_012415754.1">
    <property type="nucleotide sequence ID" value="NC_010645.1"/>
</dbReference>
<dbReference type="SMR" id="Q2L273"/>
<dbReference type="STRING" id="360910.BAV0048"/>
<dbReference type="GeneID" id="92936707"/>
<dbReference type="KEGG" id="bav:BAV0048"/>
<dbReference type="eggNOG" id="COG0096">
    <property type="taxonomic scope" value="Bacteria"/>
</dbReference>
<dbReference type="HOGENOM" id="CLU_098428_0_0_4"/>
<dbReference type="OrthoDB" id="9802617at2"/>
<dbReference type="Proteomes" id="UP000001977">
    <property type="component" value="Chromosome"/>
</dbReference>
<dbReference type="GO" id="GO:1990904">
    <property type="term" value="C:ribonucleoprotein complex"/>
    <property type="evidence" value="ECO:0007669"/>
    <property type="project" value="UniProtKB-KW"/>
</dbReference>
<dbReference type="GO" id="GO:0005840">
    <property type="term" value="C:ribosome"/>
    <property type="evidence" value="ECO:0007669"/>
    <property type="project" value="UniProtKB-KW"/>
</dbReference>
<dbReference type="GO" id="GO:0019843">
    <property type="term" value="F:rRNA binding"/>
    <property type="evidence" value="ECO:0007669"/>
    <property type="project" value="UniProtKB-UniRule"/>
</dbReference>
<dbReference type="GO" id="GO:0003735">
    <property type="term" value="F:structural constituent of ribosome"/>
    <property type="evidence" value="ECO:0007669"/>
    <property type="project" value="InterPro"/>
</dbReference>
<dbReference type="GO" id="GO:0006412">
    <property type="term" value="P:translation"/>
    <property type="evidence" value="ECO:0007669"/>
    <property type="project" value="UniProtKB-UniRule"/>
</dbReference>
<dbReference type="FunFam" id="3.30.1370.30:FF:000003">
    <property type="entry name" value="30S ribosomal protein S8"/>
    <property type="match status" value="1"/>
</dbReference>
<dbReference type="FunFam" id="3.30.1490.10:FF:000001">
    <property type="entry name" value="30S ribosomal protein S8"/>
    <property type="match status" value="1"/>
</dbReference>
<dbReference type="Gene3D" id="3.30.1370.30">
    <property type="match status" value="1"/>
</dbReference>
<dbReference type="Gene3D" id="3.30.1490.10">
    <property type="match status" value="1"/>
</dbReference>
<dbReference type="HAMAP" id="MF_01302_B">
    <property type="entry name" value="Ribosomal_uS8_B"/>
    <property type="match status" value="1"/>
</dbReference>
<dbReference type="InterPro" id="IPR000630">
    <property type="entry name" value="Ribosomal_uS8"/>
</dbReference>
<dbReference type="InterPro" id="IPR047863">
    <property type="entry name" value="Ribosomal_uS8_CS"/>
</dbReference>
<dbReference type="InterPro" id="IPR035987">
    <property type="entry name" value="Ribosomal_uS8_sf"/>
</dbReference>
<dbReference type="NCBIfam" id="NF001109">
    <property type="entry name" value="PRK00136.1"/>
    <property type="match status" value="1"/>
</dbReference>
<dbReference type="PANTHER" id="PTHR11758">
    <property type="entry name" value="40S RIBOSOMAL PROTEIN S15A"/>
    <property type="match status" value="1"/>
</dbReference>
<dbReference type="Pfam" id="PF00410">
    <property type="entry name" value="Ribosomal_S8"/>
    <property type="match status" value="1"/>
</dbReference>
<dbReference type="SUPFAM" id="SSF56047">
    <property type="entry name" value="Ribosomal protein S8"/>
    <property type="match status" value="1"/>
</dbReference>
<dbReference type="PROSITE" id="PS00053">
    <property type="entry name" value="RIBOSOMAL_S8"/>
    <property type="match status" value="1"/>
</dbReference>
<sequence>MSMSDPIADMLTRIRNAQQVDKTTVNMPSSKLKVAIATVLKDEGYIDSFEVKGSQAKPELEITLKYYAGRPVIERIERVSRPGLRIYKGRSNIPQVMNGLGVAIVSTSRGVMTDRKARANGVGGEVLCYVA</sequence>
<organism>
    <name type="scientific">Bordetella avium (strain 197N)</name>
    <dbReference type="NCBI Taxonomy" id="360910"/>
    <lineage>
        <taxon>Bacteria</taxon>
        <taxon>Pseudomonadati</taxon>
        <taxon>Pseudomonadota</taxon>
        <taxon>Betaproteobacteria</taxon>
        <taxon>Burkholderiales</taxon>
        <taxon>Alcaligenaceae</taxon>
        <taxon>Bordetella</taxon>
    </lineage>
</organism>
<accession>Q2L273</accession>
<evidence type="ECO:0000255" key="1">
    <source>
        <dbReference type="HAMAP-Rule" id="MF_01302"/>
    </source>
</evidence>
<evidence type="ECO:0000305" key="2"/>
<feature type="chain" id="PRO_0000290808" description="Small ribosomal subunit protein uS8">
    <location>
        <begin position="1"/>
        <end position="131"/>
    </location>
</feature>
<gene>
    <name evidence="1" type="primary">rpsH</name>
    <name type="ordered locus">BAV0048</name>
</gene>
<reference key="1">
    <citation type="journal article" date="2006" name="J. Bacteriol.">
        <title>Comparison of the genome sequence of the poultry pathogen Bordetella avium with those of B. bronchiseptica, B. pertussis, and B. parapertussis reveals extensive diversity in surface structures associated with host interaction.</title>
        <authorList>
            <person name="Sebaihia M."/>
            <person name="Preston A."/>
            <person name="Maskell D.J."/>
            <person name="Kuzmiak H."/>
            <person name="Connell T.D."/>
            <person name="King N.D."/>
            <person name="Orndorff P.E."/>
            <person name="Miyamoto D.M."/>
            <person name="Thomson N.R."/>
            <person name="Harris D."/>
            <person name="Goble A."/>
            <person name="Lord A."/>
            <person name="Murphy L."/>
            <person name="Quail M.A."/>
            <person name="Rutter S."/>
            <person name="Squares R."/>
            <person name="Squares S."/>
            <person name="Woodward J."/>
            <person name="Parkhill J."/>
            <person name="Temple L.M."/>
        </authorList>
    </citation>
    <scope>NUCLEOTIDE SEQUENCE [LARGE SCALE GENOMIC DNA]</scope>
    <source>
        <strain>197N</strain>
    </source>
</reference>
<protein>
    <recommendedName>
        <fullName evidence="1">Small ribosomal subunit protein uS8</fullName>
    </recommendedName>
    <alternativeName>
        <fullName evidence="2">30S ribosomal protein S8</fullName>
    </alternativeName>
</protein>
<keyword id="KW-1185">Reference proteome</keyword>
<keyword id="KW-0687">Ribonucleoprotein</keyword>
<keyword id="KW-0689">Ribosomal protein</keyword>
<keyword id="KW-0694">RNA-binding</keyword>
<keyword id="KW-0699">rRNA-binding</keyword>